<organism>
    <name type="scientific">Oxyuranus microlepidotus</name>
    <name type="common">Inland taipan</name>
    <name type="synonym">Diemenia microlepidota</name>
    <dbReference type="NCBI Taxonomy" id="111177"/>
    <lineage>
        <taxon>Eukaryota</taxon>
        <taxon>Metazoa</taxon>
        <taxon>Chordata</taxon>
        <taxon>Craniata</taxon>
        <taxon>Vertebrata</taxon>
        <taxon>Euteleostomi</taxon>
        <taxon>Lepidosauria</taxon>
        <taxon>Squamata</taxon>
        <taxon>Bifurcata</taxon>
        <taxon>Unidentata</taxon>
        <taxon>Episquamata</taxon>
        <taxon>Toxicofera</taxon>
        <taxon>Serpentes</taxon>
        <taxon>Colubroidea</taxon>
        <taxon>Elapidae</taxon>
        <taxon>Hydrophiinae</taxon>
        <taxon>Oxyuranus</taxon>
    </lineage>
</organism>
<keyword id="KW-1015">Disulfide bond</keyword>
<keyword id="KW-0646">Protease inhibitor</keyword>
<keyword id="KW-0964">Secreted</keyword>
<keyword id="KW-0722">Serine protease inhibitor</keyword>
<keyword id="KW-0732">Signal</keyword>
<comment type="function">
    <text evidence="1">Serine protease inhibitor.</text>
</comment>
<comment type="subcellular location">
    <subcellularLocation>
        <location evidence="1">Secreted</location>
    </subcellularLocation>
</comment>
<comment type="tissue specificity">
    <text>Expressed by the venom gland.</text>
</comment>
<comment type="similarity">
    <text evidence="4">Belongs to the venom Kunitz-type family.</text>
</comment>
<feature type="signal peptide" evidence="2">
    <location>
        <begin position="1"/>
        <end position="24"/>
    </location>
</feature>
<feature type="chain" id="PRO_5000395586" description="Kunitz-type serine protease inhibitor microlepidin-3">
    <location>
        <begin position="25"/>
        <end position="83"/>
    </location>
</feature>
<feature type="domain" description="BPTI/Kunitz inhibitor" evidence="3">
    <location>
        <begin position="31"/>
        <end position="81"/>
    </location>
</feature>
<feature type="disulfide bond" evidence="3">
    <location>
        <begin position="31"/>
        <end position="81"/>
    </location>
</feature>
<feature type="disulfide bond" evidence="3">
    <location>
        <begin position="40"/>
        <end position="64"/>
    </location>
</feature>
<feature type="disulfide bond" evidence="3">
    <location>
        <begin position="56"/>
        <end position="77"/>
    </location>
</feature>
<accession>B5KL27</accession>
<accession>B5L5Q7</accession>
<evidence type="ECO:0000250" key="1"/>
<evidence type="ECO:0000255" key="2"/>
<evidence type="ECO:0000255" key="3">
    <source>
        <dbReference type="PROSITE-ProRule" id="PRU00031"/>
    </source>
</evidence>
<evidence type="ECO:0000305" key="4"/>
<reference key="1">
    <citation type="journal article" date="2008" name="Cell. Mol. Life Sci.">
        <title>Common evolution of waprin and Kunitz-like toxin families in Australian venomous snakes.</title>
        <authorList>
            <person name="St Pierre L."/>
            <person name="Earl S.T."/>
            <person name="Filippovich I."/>
            <person name="Sorokina N."/>
            <person name="Masci P.P."/>
            <person name="De Jersey J."/>
            <person name="Lavin M.F."/>
        </authorList>
    </citation>
    <scope>NUCLEOTIDE SEQUENCE [GENOMIC DNA / MRNA]</scope>
    <source>
        <tissue>Venom gland</tissue>
    </source>
</reference>
<sequence length="83" mass="9030">MSSGGLLLLLGLLTLWEVLTPVSSKDRPKFCELPADIGPCEDFTGAFHYSPREHECIEFIYGGCEGNANNFNTLEECESACAA</sequence>
<name>VKT3_OXYMI</name>
<proteinExistence type="evidence at transcript level"/>
<dbReference type="EMBL" id="EF990735">
    <property type="protein sequence ID" value="ABV64389.1"/>
    <property type="molecule type" value="mRNA"/>
</dbReference>
<dbReference type="EMBL" id="EU401843">
    <property type="protein sequence ID" value="ACC77792.1"/>
    <property type="molecule type" value="Genomic_DNA"/>
</dbReference>
<dbReference type="EMBL" id="EU401845">
    <property type="protein sequence ID" value="ACC77794.1"/>
    <property type="molecule type" value="Genomic_DNA"/>
</dbReference>
<dbReference type="SMR" id="B5KL27"/>
<dbReference type="MEROPS" id="I02.052"/>
<dbReference type="GO" id="GO:0005576">
    <property type="term" value="C:extracellular region"/>
    <property type="evidence" value="ECO:0007669"/>
    <property type="project" value="UniProtKB-SubCell"/>
</dbReference>
<dbReference type="GO" id="GO:0004867">
    <property type="term" value="F:serine-type endopeptidase inhibitor activity"/>
    <property type="evidence" value="ECO:0007669"/>
    <property type="project" value="UniProtKB-KW"/>
</dbReference>
<dbReference type="CDD" id="cd22594">
    <property type="entry name" value="Kunitz_textilinin-like"/>
    <property type="match status" value="1"/>
</dbReference>
<dbReference type="FunFam" id="4.10.410.10:FF:000004">
    <property type="entry name" value="Tissue factor pathway inhibitor"/>
    <property type="match status" value="1"/>
</dbReference>
<dbReference type="Gene3D" id="4.10.410.10">
    <property type="entry name" value="Pancreatic trypsin inhibitor Kunitz domain"/>
    <property type="match status" value="1"/>
</dbReference>
<dbReference type="InterPro" id="IPR002223">
    <property type="entry name" value="Kunitz_BPTI"/>
</dbReference>
<dbReference type="InterPro" id="IPR036880">
    <property type="entry name" value="Kunitz_BPTI_sf"/>
</dbReference>
<dbReference type="InterPro" id="IPR020901">
    <property type="entry name" value="Prtase_inh_Kunz-CS"/>
</dbReference>
<dbReference type="InterPro" id="IPR050098">
    <property type="entry name" value="TFPI/VKTCI-like"/>
</dbReference>
<dbReference type="PANTHER" id="PTHR10083">
    <property type="entry name" value="KUNITZ-TYPE PROTEASE INHIBITOR-RELATED"/>
    <property type="match status" value="1"/>
</dbReference>
<dbReference type="Pfam" id="PF00014">
    <property type="entry name" value="Kunitz_BPTI"/>
    <property type="match status" value="1"/>
</dbReference>
<dbReference type="PRINTS" id="PR00759">
    <property type="entry name" value="BASICPTASE"/>
</dbReference>
<dbReference type="SMART" id="SM00131">
    <property type="entry name" value="KU"/>
    <property type="match status" value="1"/>
</dbReference>
<dbReference type="SUPFAM" id="SSF57362">
    <property type="entry name" value="BPTI-like"/>
    <property type="match status" value="1"/>
</dbReference>
<dbReference type="PROSITE" id="PS00280">
    <property type="entry name" value="BPTI_KUNITZ_1"/>
    <property type="match status" value="1"/>
</dbReference>
<dbReference type="PROSITE" id="PS50279">
    <property type="entry name" value="BPTI_KUNITZ_2"/>
    <property type="match status" value="1"/>
</dbReference>
<protein>
    <recommendedName>
        <fullName>Kunitz-type serine protease inhibitor microlepidin-3</fullName>
    </recommendedName>
</protein>